<feature type="chain" id="PRO_0000379242" description="ATP-dependent helicase/nuclease subunit A">
    <location>
        <begin position="1"/>
        <end position="1234"/>
    </location>
</feature>
<feature type="domain" description="UvrD-like helicase ATP-binding" evidence="1">
    <location>
        <begin position="9"/>
        <end position="482"/>
    </location>
</feature>
<feature type="domain" description="UvrD-like helicase C-terminal" evidence="1">
    <location>
        <begin position="509"/>
        <end position="800"/>
    </location>
</feature>
<feature type="binding site" evidence="1">
    <location>
        <begin position="30"/>
        <end position="37"/>
    </location>
    <ligand>
        <name>ATP</name>
        <dbReference type="ChEBI" id="CHEBI:30616"/>
    </ligand>
</feature>
<evidence type="ECO:0000255" key="1">
    <source>
        <dbReference type="HAMAP-Rule" id="MF_01451"/>
    </source>
</evidence>
<comment type="function">
    <text evidence="1">The heterodimer acts as both an ATP-dependent DNA helicase and an ATP-dependent, dual-direction single-stranded exonuclease. Recognizes the chi site generating a DNA molecule suitable for the initiation of homologous recombination. The AddA nuclease domain is required for chi fragment generation; this subunit has the helicase and 3' -&gt; 5' nuclease activities.</text>
</comment>
<comment type="catalytic activity">
    <reaction evidence="1">
        <text>Couples ATP hydrolysis with the unwinding of duplex DNA by translocating in the 3'-5' direction.</text>
        <dbReference type="EC" id="5.6.2.4"/>
    </reaction>
</comment>
<comment type="catalytic activity">
    <reaction evidence="1">
        <text>ATP + H2O = ADP + phosphate + H(+)</text>
        <dbReference type="Rhea" id="RHEA:13065"/>
        <dbReference type="ChEBI" id="CHEBI:15377"/>
        <dbReference type="ChEBI" id="CHEBI:15378"/>
        <dbReference type="ChEBI" id="CHEBI:30616"/>
        <dbReference type="ChEBI" id="CHEBI:43474"/>
        <dbReference type="ChEBI" id="CHEBI:456216"/>
        <dbReference type="EC" id="5.6.2.4"/>
    </reaction>
</comment>
<comment type="cofactor">
    <cofactor evidence="1">
        <name>Mg(2+)</name>
        <dbReference type="ChEBI" id="CHEBI:18420"/>
    </cofactor>
</comment>
<comment type="subunit">
    <text evidence="1">Heterodimer of AddA and AddB/RexB.</text>
</comment>
<comment type="similarity">
    <text evidence="1">Belongs to the helicase family. AddA subfamily.</text>
</comment>
<proteinExistence type="inferred from homology"/>
<name>ADDA_BACP2</name>
<sequence>MQIPKPNNSTWTDDQWEAIVSEGQDILVAAAAGSGKTAVLVERLIRKMTRPEHPVDVDRLLVVTFTNASAAEMKHRITEALEKELAKNPGSLHMRRQLSLMNRANISTLHSFCLQVLRTFYYEIDLDPGFRLADQTEGELLGDEVLDELFEDEYKAGKPSFFELVDRYTSDRHDLDLQWLVKRIYDFSRSHPSPEQWMRAFLSLYDVDAQTKVEELPFYPYIKEDLSLVLRSCQELLERALSLSKEPGGPAPRAENFIDDLEQVNELIRHQDDFEKLYELLPNVNFKRLKTCKGDEYDPVLLEKATDARNQAKKQLEKLKDEYFMRSPAQHLKSLAEMKPIVETLVELVIQFGERFERAKQEKSIVDFSDLEHYCLRILAEQDAEGHLIETEAAKYYQQQFEEVLVDEYQDTNLVQETILKLVSKGEHSSEGNLFMVGDVKQSIYRFRLAEPMLFLNKYKHFQPDGKETGKRIDLNKNFRSRSDVLDSTNFLFKQLMGETVGEIEYDEQAELKLGASYPESKDTTTEMLLVHLDQQEAETGEEREELETVQFEARIIAKKIKELVEQPFQVYDAKQQMTRNLQYRDIVILLRSMPWAPQMMEELKKQGIPVYANLSSGYFEATEVSVILSLLKVIDNPYQDIPLAAVLRSPLVHLDENELALIRTSDKKGTYYDAVKAFMSVTHSDHPTCKKLERFFQLLRKWRDFSINHSVAELIWEVYRDTQYLDYVGGMPGGKQRQANLRALYDRAKQYEKAAFRGLFRFLRFIERMQERGDDLGAAKTFSETEDVVRMMTIHSSKGLEFPVVFTVGLGRNFNMMDLNQSYLLDKELGFGSKYIHPELRISYATLPLVAMKKKMRKELLSEELRVLYVALTRAKEKLFLVGSVKNQVKALSKWQNAATGEEWLLPDFERYQSKTYLDFIGPALIRHQAMSSVLEETGDVVLSHPSTFTISFTQASDLLKEDMSLEKKEQDEIVQALMDGLPVEGYGDADEKVAERLSWKYPYLAASQVGTKQSVSEIKRMKEIQDEYSVPSSIRKARATLYDRPAFMKKKTLTAAEQGTAMHTVMQHIPLPSEEPYDESRIGHLLDSLQQRDLLTDEQVQSINQEGIAAFFSTSIGQKLLKADWVKREVSFSMVLPVKEVYSHIDTEGEPVLIQGMIDCLFETDGKLYLLDYKTDRVQGRYTGGIDAAVPILKKRYETQIALYAKAVERLTNRTLEEKILYFFDGNVEISL</sequence>
<gene>
    <name evidence="1" type="primary">addA</name>
    <name type="ordered locus">BPUM_0994</name>
</gene>
<reference key="1">
    <citation type="journal article" date="2007" name="PLoS ONE">
        <title>Paradoxical DNA repair and peroxide resistance gene conservation in Bacillus pumilus SAFR-032.</title>
        <authorList>
            <person name="Gioia J."/>
            <person name="Yerrapragada S."/>
            <person name="Qin X."/>
            <person name="Jiang H."/>
            <person name="Igboeli O.C."/>
            <person name="Muzny D."/>
            <person name="Dugan-Rocha S."/>
            <person name="Ding Y."/>
            <person name="Hawes A."/>
            <person name="Liu W."/>
            <person name="Perez L."/>
            <person name="Kovar C."/>
            <person name="Dinh H."/>
            <person name="Lee S."/>
            <person name="Nazareth L."/>
            <person name="Blyth P."/>
            <person name="Holder M."/>
            <person name="Buhay C."/>
            <person name="Tirumalai M.R."/>
            <person name="Liu Y."/>
            <person name="Dasgupta I."/>
            <person name="Bokhetache L."/>
            <person name="Fujita M."/>
            <person name="Karouia F."/>
            <person name="Eswara Moorthy P."/>
            <person name="Siefert J."/>
            <person name="Uzman A."/>
            <person name="Buzumbo P."/>
            <person name="Verma A."/>
            <person name="Zwiya H."/>
            <person name="McWilliams B.D."/>
            <person name="Olowu A."/>
            <person name="Clinkenbeard K.D."/>
            <person name="Newcombe D."/>
            <person name="Golebiewski L."/>
            <person name="Petrosino J.F."/>
            <person name="Nicholson W.L."/>
            <person name="Fox G.E."/>
            <person name="Venkateswaran K."/>
            <person name="Highlander S.K."/>
            <person name="Weinstock G.M."/>
        </authorList>
    </citation>
    <scope>NUCLEOTIDE SEQUENCE [LARGE SCALE GENOMIC DNA]</scope>
    <source>
        <strain>SAFR-032</strain>
    </source>
</reference>
<organism>
    <name type="scientific">Bacillus pumilus (strain SAFR-032)</name>
    <dbReference type="NCBI Taxonomy" id="315750"/>
    <lineage>
        <taxon>Bacteria</taxon>
        <taxon>Bacillati</taxon>
        <taxon>Bacillota</taxon>
        <taxon>Bacilli</taxon>
        <taxon>Bacillales</taxon>
        <taxon>Bacillaceae</taxon>
        <taxon>Bacillus</taxon>
    </lineage>
</organism>
<accession>A8FBR1</accession>
<keyword id="KW-0067">ATP-binding</keyword>
<keyword id="KW-0227">DNA damage</keyword>
<keyword id="KW-0234">DNA repair</keyword>
<keyword id="KW-0238">DNA-binding</keyword>
<keyword id="KW-0269">Exonuclease</keyword>
<keyword id="KW-0347">Helicase</keyword>
<keyword id="KW-0378">Hydrolase</keyword>
<keyword id="KW-0413">Isomerase</keyword>
<keyword id="KW-0540">Nuclease</keyword>
<keyword id="KW-0547">Nucleotide-binding</keyword>
<dbReference type="EC" id="3.1.-.-" evidence="1"/>
<dbReference type="EC" id="5.6.2.4" evidence="1"/>
<dbReference type="EMBL" id="CP000813">
    <property type="protein sequence ID" value="ABV61678.1"/>
    <property type="molecule type" value="Genomic_DNA"/>
</dbReference>
<dbReference type="RefSeq" id="WP_012009495.1">
    <property type="nucleotide sequence ID" value="NC_009848.4"/>
</dbReference>
<dbReference type="SMR" id="A8FBR1"/>
<dbReference type="STRING" id="315750.BPUM_0994"/>
<dbReference type="GeneID" id="23399387"/>
<dbReference type="KEGG" id="bpu:BPUM_0994"/>
<dbReference type="eggNOG" id="COG1074">
    <property type="taxonomic scope" value="Bacteria"/>
</dbReference>
<dbReference type="HOGENOM" id="CLU_001114_3_1_9"/>
<dbReference type="OrthoDB" id="9810135at2"/>
<dbReference type="Proteomes" id="UP000001355">
    <property type="component" value="Chromosome"/>
</dbReference>
<dbReference type="GO" id="GO:0005829">
    <property type="term" value="C:cytosol"/>
    <property type="evidence" value="ECO:0007669"/>
    <property type="project" value="TreeGrafter"/>
</dbReference>
<dbReference type="GO" id="GO:0033202">
    <property type="term" value="C:DNA helicase complex"/>
    <property type="evidence" value="ECO:0007669"/>
    <property type="project" value="TreeGrafter"/>
</dbReference>
<dbReference type="GO" id="GO:0043138">
    <property type="term" value="F:3'-5' DNA helicase activity"/>
    <property type="evidence" value="ECO:0007669"/>
    <property type="project" value="UniProtKB-UniRule"/>
</dbReference>
<dbReference type="GO" id="GO:0008408">
    <property type="term" value="F:3'-5' exonuclease activity"/>
    <property type="evidence" value="ECO:0007669"/>
    <property type="project" value="UniProtKB-UniRule"/>
</dbReference>
<dbReference type="GO" id="GO:0005524">
    <property type="term" value="F:ATP binding"/>
    <property type="evidence" value="ECO:0007669"/>
    <property type="project" value="UniProtKB-UniRule"/>
</dbReference>
<dbReference type="GO" id="GO:0016887">
    <property type="term" value="F:ATP hydrolysis activity"/>
    <property type="evidence" value="ECO:0007669"/>
    <property type="project" value="RHEA"/>
</dbReference>
<dbReference type="GO" id="GO:0003690">
    <property type="term" value="F:double-stranded DNA binding"/>
    <property type="evidence" value="ECO:0007669"/>
    <property type="project" value="UniProtKB-UniRule"/>
</dbReference>
<dbReference type="GO" id="GO:0000724">
    <property type="term" value="P:double-strand break repair via homologous recombination"/>
    <property type="evidence" value="ECO:0007669"/>
    <property type="project" value="UniProtKB-UniRule"/>
</dbReference>
<dbReference type="CDD" id="cd17932">
    <property type="entry name" value="DEXQc_UvrD"/>
    <property type="match status" value="1"/>
</dbReference>
<dbReference type="CDD" id="cd18807">
    <property type="entry name" value="SF1_C_UvrD"/>
    <property type="match status" value="1"/>
</dbReference>
<dbReference type="FunFam" id="3.40.50.300:FF:001187">
    <property type="entry name" value="ATP-dependent helicase/nuclease subunit A"/>
    <property type="match status" value="1"/>
</dbReference>
<dbReference type="FunFam" id="3.40.50.300:FF:001196">
    <property type="entry name" value="ATP-dependent helicase/nuclease subunit A"/>
    <property type="match status" value="1"/>
</dbReference>
<dbReference type="FunFam" id="3.40.50.300:FF:001236">
    <property type="entry name" value="ATP-dependent helicase/nuclease subunit A"/>
    <property type="match status" value="1"/>
</dbReference>
<dbReference type="Gene3D" id="3.90.320.10">
    <property type="match status" value="1"/>
</dbReference>
<dbReference type="Gene3D" id="3.40.50.300">
    <property type="entry name" value="P-loop containing nucleotide triphosphate hydrolases"/>
    <property type="match status" value="4"/>
</dbReference>
<dbReference type="HAMAP" id="MF_01451">
    <property type="entry name" value="AddA"/>
    <property type="match status" value="1"/>
</dbReference>
<dbReference type="InterPro" id="IPR014152">
    <property type="entry name" value="AddA"/>
</dbReference>
<dbReference type="InterPro" id="IPR014017">
    <property type="entry name" value="DNA_helicase_UvrD-like_C"/>
</dbReference>
<dbReference type="InterPro" id="IPR000212">
    <property type="entry name" value="DNA_helicase_UvrD/REP"/>
</dbReference>
<dbReference type="InterPro" id="IPR027417">
    <property type="entry name" value="P-loop_NTPase"/>
</dbReference>
<dbReference type="InterPro" id="IPR011604">
    <property type="entry name" value="PDDEXK-like_dom_sf"/>
</dbReference>
<dbReference type="InterPro" id="IPR038726">
    <property type="entry name" value="PDDEXK_AddAB-type"/>
</dbReference>
<dbReference type="InterPro" id="IPR011335">
    <property type="entry name" value="Restrct_endonuc-II-like"/>
</dbReference>
<dbReference type="InterPro" id="IPR014016">
    <property type="entry name" value="UvrD-like_ATP-bd"/>
</dbReference>
<dbReference type="NCBIfam" id="TIGR02785">
    <property type="entry name" value="addA_Gpos"/>
    <property type="match status" value="1"/>
</dbReference>
<dbReference type="PANTHER" id="PTHR11070:SF48">
    <property type="entry name" value="ATP-DEPENDENT HELICASE_NUCLEASE SUBUNIT A"/>
    <property type="match status" value="1"/>
</dbReference>
<dbReference type="PANTHER" id="PTHR11070">
    <property type="entry name" value="UVRD / RECB / PCRA DNA HELICASE FAMILY MEMBER"/>
    <property type="match status" value="1"/>
</dbReference>
<dbReference type="Pfam" id="PF12705">
    <property type="entry name" value="PDDEXK_1"/>
    <property type="match status" value="1"/>
</dbReference>
<dbReference type="Pfam" id="PF00580">
    <property type="entry name" value="UvrD-helicase"/>
    <property type="match status" value="1"/>
</dbReference>
<dbReference type="Pfam" id="PF13361">
    <property type="entry name" value="UvrD_C"/>
    <property type="match status" value="1"/>
</dbReference>
<dbReference type="SUPFAM" id="SSF52540">
    <property type="entry name" value="P-loop containing nucleoside triphosphate hydrolases"/>
    <property type="match status" value="1"/>
</dbReference>
<dbReference type="SUPFAM" id="SSF52980">
    <property type="entry name" value="Restriction endonuclease-like"/>
    <property type="match status" value="1"/>
</dbReference>
<dbReference type="PROSITE" id="PS51198">
    <property type="entry name" value="UVRD_HELICASE_ATP_BIND"/>
    <property type="match status" value="1"/>
</dbReference>
<dbReference type="PROSITE" id="PS51217">
    <property type="entry name" value="UVRD_HELICASE_CTER"/>
    <property type="match status" value="1"/>
</dbReference>
<protein>
    <recommendedName>
        <fullName evidence="1">ATP-dependent helicase/nuclease subunit A</fullName>
        <ecNumber evidence="1">3.1.-.-</ecNumber>
        <ecNumber evidence="1">5.6.2.4</ecNumber>
    </recommendedName>
    <alternativeName>
        <fullName evidence="1">ATP-dependent helicase/nuclease AddA</fullName>
    </alternativeName>
    <alternativeName>
        <fullName evidence="1">DNA 3'-5' helicase AddA</fullName>
    </alternativeName>
</protein>